<sequence>MNFEFEREIGFINSQPSLAECLTSFPAVLESFQTSSIKESTVIPPPFEHTIPSLSPCAASQPRPTARNQQNRRNSNTNGIQTHQRAAQQPCPPGQAPATATAAGPMAPEFPWMKEKKSSKKSSKPGSSSGGGAPILPPSSASPSPTASGYASASIESPTDQSQAGLDAGGAGSRRLRTAYTNTQLLELEKEFHFNKYLCRPRRVEIAALLDLTERQVKVWFQNRRMKHKRQTHHRDGSGGGNDSNEPGGFEPLEGADASSPYSSQPLEASGTGESESEQGSSNPSSAAYASDSGDNAQSTAEEGGLLGCPDRQSLSAVSGSSATHLHPLTATNSSDNQAPLQLNRTGPEPSFSEQRDSSIPSATAALPDLTLFATDACLSPSLQSSLDSPVDFSEEDFDLFTSTLCTIDLQHLNF</sequence>
<comment type="function">
    <text evidence="1">Sequence-specific transcription factor which is part of a developmental regulatory system that provides cells with specific positional identities on the anterior-posterior axis.</text>
</comment>
<comment type="subcellular location">
    <subcellularLocation>
        <location evidence="2">Nucleus</location>
    </subcellularLocation>
</comment>
<comment type="similarity">
    <text evidence="4">Belongs to the Antp homeobox family. Proboscipedia subfamily.</text>
</comment>
<organism>
    <name type="scientific">Takifugu rubripes</name>
    <name type="common">Japanese pufferfish</name>
    <name type="synonym">Fugu rubripes</name>
    <dbReference type="NCBI Taxonomy" id="31033"/>
    <lineage>
        <taxon>Eukaryota</taxon>
        <taxon>Metazoa</taxon>
        <taxon>Chordata</taxon>
        <taxon>Craniata</taxon>
        <taxon>Vertebrata</taxon>
        <taxon>Euteleostomi</taxon>
        <taxon>Actinopterygii</taxon>
        <taxon>Neopterygii</taxon>
        <taxon>Teleostei</taxon>
        <taxon>Neoteleostei</taxon>
        <taxon>Acanthomorphata</taxon>
        <taxon>Eupercaria</taxon>
        <taxon>Tetraodontiformes</taxon>
        <taxon>Tetradontoidea</taxon>
        <taxon>Tetraodontidae</taxon>
        <taxon>Takifugu</taxon>
    </lineage>
</organism>
<gene>
    <name type="primary">hoxb2a</name>
</gene>
<protein>
    <recommendedName>
        <fullName>Homeobox protein Hox-B2a</fullName>
    </recommendedName>
</protein>
<proteinExistence type="inferred from homology"/>
<name>HXB2A_TAKRU</name>
<reference key="1">
    <citation type="journal article" date="2004" name="J. Exp. Zool. B Mol. Dev. Evol.">
        <title>Comparative genomic analysis of vertebrate Hox3 and Hox4 genes.</title>
        <authorList>
            <person name="Hadrys T."/>
            <person name="Prince V.E."/>
            <person name="Hunter M."/>
            <person name="Baker R."/>
            <person name="Rinkwitz S."/>
        </authorList>
    </citation>
    <scope>NUCLEOTIDE SEQUENCE [GENOMIC DNA]</scope>
</reference>
<reference key="2">
    <citation type="journal article" date="2006" name="Proc. Natl. Acad. Sci. U.S.A.">
        <title>Highly conserved syntenic blocks at the vertebrate Hox loci and conserved regulatory elements within and outside Hox gene clusters.</title>
        <authorList>
            <person name="Lee A.P."/>
            <person name="Koh E.G.L."/>
            <person name="Tay A."/>
            <person name="Brenner S."/>
            <person name="Venkatesh B."/>
        </authorList>
    </citation>
    <scope>NUCLEOTIDE SEQUENCE [GENOMIC DNA]</scope>
</reference>
<accession>Q6IEI0</accession>
<keyword id="KW-0217">Developmental protein</keyword>
<keyword id="KW-0238">DNA-binding</keyword>
<keyword id="KW-0371">Homeobox</keyword>
<keyword id="KW-0539">Nucleus</keyword>
<keyword id="KW-1185">Reference proteome</keyword>
<keyword id="KW-0804">Transcription</keyword>
<keyword id="KW-0805">Transcription regulation</keyword>
<dbReference type="EMBL" id="BK005104">
    <property type="protein sequence ID" value="DAA05216.1"/>
    <property type="molecule type" value="Genomic_DNA"/>
</dbReference>
<dbReference type="EMBL" id="DQ481665">
    <property type="protein sequence ID" value="ABF22418.1"/>
    <property type="molecule type" value="Genomic_DNA"/>
</dbReference>
<dbReference type="SMR" id="Q6IEI0"/>
<dbReference type="FunCoup" id="Q6IEI0">
    <property type="interactions" value="15"/>
</dbReference>
<dbReference type="STRING" id="31033.ENSTRUP00000025076"/>
<dbReference type="Ensembl" id="ENSTRUT00000025179.3">
    <property type="protein sequence ID" value="ENSTRUP00000025076.3"/>
    <property type="gene ID" value="ENSTRUG00000009966.3"/>
</dbReference>
<dbReference type="GeneID" id="101073209"/>
<dbReference type="KEGG" id="tru:101073209"/>
<dbReference type="CTD" id="30338"/>
<dbReference type="eggNOG" id="KOG0489">
    <property type="taxonomic scope" value="Eukaryota"/>
</dbReference>
<dbReference type="GeneTree" id="ENSGT00940000155029"/>
<dbReference type="InParanoid" id="Q6IEI0"/>
<dbReference type="OMA" id="DLPHFNF"/>
<dbReference type="OrthoDB" id="6159439at2759"/>
<dbReference type="Proteomes" id="UP000005226">
    <property type="component" value="Chromosome 5"/>
</dbReference>
<dbReference type="GO" id="GO:0005634">
    <property type="term" value="C:nucleus"/>
    <property type="evidence" value="ECO:0007669"/>
    <property type="project" value="UniProtKB-SubCell"/>
</dbReference>
<dbReference type="GO" id="GO:0000981">
    <property type="term" value="F:DNA-binding transcription factor activity, RNA polymerase II-specific"/>
    <property type="evidence" value="ECO:0007669"/>
    <property type="project" value="InterPro"/>
</dbReference>
<dbReference type="GO" id="GO:0000978">
    <property type="term" value="F:RNA polymerase II cis-regulatory region sequence-specific DNA binding"/>
    <property type="evidence" value="ECO:0007669"/>
    <property type="project" value="TreeGrafter"/>
</dbReference>
<dbReference type="CDD" id="cd00086">
    <property type="entry name" value="homeodomain"/>
    <property type="match status" value="1"/>
</dbReference>
<dbReference type="FunFam" id="1.10.10.60:FF:000145">
    <property type="entry name" value="homeobox protein Hox-A2"/>
    <property type="match status" value="1"/>
</dbReference>
<dbReference type="Gene3D" id="1.10.10.60">
    <property type="entry name" value="Homeodomain-like"/>
    <property type="match status" value="1"/>
</dbReference>
<dbReference type="InterPro" id="IPR001356">
    <property type="entry name" value="HD"/>
</dbReference>
<dbReference type="InterPro" id="IPR020479">
    <property type="entry name" value="HD_metazoa"/>
</dbReference>
<dbReference type="InterPro" id="IPR001827">
    <property type="entry name" value="Homeobox_Antennapedia_CS"/>
</dbReference>
<dbReference type="InterPro" id="IPR017970">
    <property type="entry name" value="Homeobox_CS"/>
</dbReference>
<dbReference type="InterPro" id="IPR009057">
    <property type="entry name" value="Homeodomain-like_sf"/>
</dbReference>
<dbReference type="PANTHER" id="PTHR45664:SF7">
    <property type="entry name" value="HOMEOBOX PROTEIN HOX-B2"/>
    <property type="match status" value="1"/>
</dbReference>
<dbReference type="PANTHER" id="PTHR45664">
    <property type="entry name" value="PROTEIN ZERKNUELLT 1-RELATED"/>
    <property type="match status" value="1"/>
</dbReference>
<dbReference type="Pfam" id="PF00046">
    <property type="entry name" value="Homeodomain"/>
    <property type="match status" value="1"/>
</dbReference>
<dbReference type="PRINTS" id="PR00024">
    <property type="entry name" value="HOMEOBOX"/>
</dbReference>
<dbReference type="SMART" id="SM00389">
    <property type="entry name" value="HOX"/>
    <property type="match status" value="1"/>
</dbReference>
<dbReference type="SUPFAM" id="SSF46689">
    <property type="entry name" value="Homeodomain-like"/>
    <property type="match status" value="1"/>
</dbReference>
<dbReference type="PROSITE" id="PS00032">
    <property type="entry name" value="ANTENNAPEDIA"/>
    <property type="match status" value="1"/>
</dbReference>
<dbReference type="PROSITE" id="PS00027">
    <property type="entry name" value="HOMEOBOX_1"/>
    <property type="match status" value="1"/>
</dbReference>
<dbReference type="PROSITE" id="PS50071">
    <property type="entry name" value="HOMEOBOX_2"/>
    <property type="match status" value="1"/>
</dbReference>
<evidence type="ECO:0000250" key="1"/>
<evidence type="ECO:0000255" key="2">
    <source>
        <dbReference type="PROSITE-ProRule" id="PRU00108"/>
    </source>
</evidence>
<evidence type="ECO:0000256" key="3">
    <source>
        <dbReference type="SAM" id="MobiDB-lite"/>
    </source>
</evidence>
<evidence type="ECO:0000305" key="4"/>
<feature type="chain" id="PRO_0000265977" description="Homeobox protein Hox-B2a">
    <location>
        <begin position="1"/>
        <end position="415"/>
    </location>
</feature>
<feature type="DNA-binding region" description="Homeobox" evidence="2">
    <location>
        <begin position="173"/>
        <end position="232"/>
    </location>
</feature>
<feature type="region of interest" description="Disordered" evidence="3">
    <location>
        <begin position="43"/>
        <end position="171"/>
    </location>
</feature>
<feature type="region of interest" description="Disordered" evidence="3">
    <location>
        <begin position="225"/>
        <end position="360"/>
    </location>
</feature>
<feature type="short sequence motif" description="Antp-type hexapeptide">
    <location>
        <begin position="109"/>
        <end position="114"/>
    </location>
</feature>
<feature type="compositionally biased region" description="Polar residues" evidence="3">
    <location>
        <begin position="75"/>
        <end position="85"/>
    </location>
</feature>
<feature type="compositionally biased region" description="Low complexity" evidence="3">
    <location>
        <begin position="96"/>
        <end position="107"/>
    </location>
</feature>
<feature type="compositionally biased region" description="Low complexity" evidence="3">
    <location>
        <begin position="138"/>
        <end position="154"/>
    </location>
</feature>
<feature type="compositionally biased region" description="Polar residues" evidence="3">
    <location>
        <begin position="155"/>
        <end position="164"/>
    </location>
</feature>
<feature type="compositionally biased region" description="Low complexity" evidence="3">
    <location>
        <begin position="268"/>
        <end position="288"/>
    </location>
</feature>
<feature type="compositionally biased region" description="Polar residues" evidence="3">
    <location>
        <begin position="313"/>
        <end position="345"/>
    </location>
</feature>